<reference key="1">
    <citation type="submission" date="2004-07" db="EMBL/GenBank/DDBJ databases">
        <authorList>
            <consortium name="NIH - Zebrafish Gene Collection (ZGC) project"/>
        </authorList>
    </citation>
    <scope>NUCLEOTIDE SEQUENCE [LARGE SCALE MRNA]</scope>
    <source>
        <tissue>Embryo</tissue>
    </source>
</reference>
<reference key="2">
    <citation type="journal article" date="2006" name="Circ. Res.">
        <title>Embryonic growth-associated protein is one subunit of a novel N-terminal acetyltransferase complex essential for embryonic vascular development.</title>
        <authorList>
            <person name="Wenzlau J.M."/>
            <person name="Garl P.J."/>
            <person name="Simpson P."/>
            <person name="Stenmark K.R."/>
            <person name="West J."/>
            <person name="Artinger K.B."/>
            <person name="Nemenoff R.A."/>
            <person name="Weiser-Evans M.C.M."/>
        </authorList>
    </citation>
    <scope>DEVELOPMENTAL STAGE</scope>
    <scope>INTERACTION WITH NAA35</scope>
    <scope>FUNCTION</scope>
</reference>
<comment type="function">
    <text evidence="1 3">N-alpha-acetyltransferase that acetylates the N-terminus of proteins that retain their initiating methionine (By similarity). Has a broad substrate specificity: able to acetylate the initiator methionine of most peptides, except for those with a proline in second position (By similarity). Also displays N-epsilon-acetyltransferase activity by mediating acetylation of the side chain of specific lysines on proteins (By similarity). The relevance of N-epsilon-acetyltransferase activity is however unclear (By similarity). Required for sister chromatid cohesion during mitosis by promoting binding of CDCA5/sororin to cohesin (By similarity). Essential in embryonic cell proliferation and survival (PubMed:16484612).</text>
</comment>
<comment type="catalytic activity">
    <reaction evidence="1">
        <text>N-terminal L-methionyl-L-alanyl-[protein] + acetyl-CoA = N-terminal N(alpha)-acetyl-L-methionyl-L-alanyl-[protein] + CoA + H(+)</text>
        <dbReference type="Rhea" id="RHEA:50564"/>
        <dbReference type="Rhea" id="RHEA-COMP:12726"/>
        <dbReference type="Rhea" id="RHEA-COMP:12727"/>
        <dbReference type="ChEBI" id="CHEBI:15378"/>
        <dbReference type="ChEBI" id="CHEBI:57287"/>
        <dbReference type="ChEBI" id="CHEBI:57288"/>
        <dbReference type="ChEBI" id="CHEBI:133398"/>
        <dbReference type="ChEBI" id="CHEBI:133399"/>
        <dbReference type="EC" id="2.3.1.258"/>
    </reaction>
</comment>
<comment type="catalytic activity">
    <reaction evidence="1">
        <text>N-terminal L-methionyl-L-seryl-[protein] + acetyl-CoA = N-terminal N(alpha)-acetyl-L-methionyl-L-seryl-[protein] + CoA + H(+)</text>
        <dbReference type="Rhea" id="RHEA:50568"/>
        <dbReference type="Rhea" id="RHEA-COMP:12728"/>
        <dbReference type="Rhea" id="RHEA-COMP:12729"/>
        <dbReference type="ChEBI" id="CHEBI:15378"/>
        <dbReference type="ChEBI" id="CHEBI:57287"/>
        <dbReference type="ChEBI" id="CHEBI:57288"/>
        <dbReference type="ChEBI" id="CHEBI:133400"/>
        <dbReference type="ChEBI" id="CHEBI:133401"/>
        <dbReference type="EC" id="2.3.1.258"/>
    </reaction>
</comment>
<comment type="catalytic activity">
    <reaction evidence="1">
        <text>N-terminal L-methionyl-L-valyl-[protein] + acetyl-CoA = N-terminal N(alpha)-acetyl-L-methionyl-L-valyl-[protein] + CoA + H(+)</text>
        <dbReference type="Rhea" id="RHEA:50572"/>
        <dbReference type="Rhea" id="RHEA-COMP:12730"/>
        <dbReference type="Rhea" id="RHEA-COMP:12731"/>
        <dbReference type="ChEBI" id="CHEBI:15378"/>
        <dbReference type="ChEBI" id="CHEBI:57287"/>
        <dbReference type="ChEBI" id="CHEBI:57288"/>
        <dbReference type="ChEBI" id="CHEBI:133402"/>
        <dbReference type="ChEBI" id="CHEBI:133403"/>
        <dbReference type="EC" id="2.3.1.258"/>
    </reaction>
</comment>
<comment type="catalytic activity">
    <reaction evidence="1">
        <text>N-terminal L-methionyl-L-threonyl-[protein] + acetyl-CoA = N-terminal N(alpha)-acetyl-L-methionyl-L-threonyl-[protein] + CoA + H(+)</text>
        <dbReference type="Rhea" id="RHEA:50576"/>
        <dbReference type="Rhea" id="RHEA-COMP:12732"/>
        <dbReference type="Rhea" id="RHEA-COMP:12733"/>
        <dbReference type="ChEBI" id="CHEBI:15378"/>
        <dbReference type="ChEBI" id="CHEBI:57287"/>
        <dbReference type="ChEBI" id="CHEBI:57288"/>
        <dbReference type="ChEBI" id="CHEBI:133404"/>
        <dbReference type="ChEBI" id="CHEBI:133405"/>
        <dbReference type="EC" id="2.3.1.258"/>
    </reaction>
</comment>
<comment type="catalytic activity">
    <reaction evidence="1">
        <text>N-terminal L-methionyl-L-lysyl-[protein] + acetyl-CoA = N-terminal N(alpha)-acetyl-L-methionyl-L-lysyl-[protein] + CoA + H(+)</text>
        <dbReference type="Rhea" id="RHEA:50580"/>
        <dbReference type="Rhea" id="RHEA-COMP:12734"/>
        <dbReference type="Rhea" id="RHEA-COMP:12735"/>
        <dbReference type="ChEBI" id="CHEBI:15378"/>
        <dbReference type="ChEBI" id="CHEBI:57287"/>
        <dbReference type="ChEBI" id="CHEBI:57288"/>
        <dbReference type="ChEBI" id="CHEBI:133406"/>
        <dbReference type="ChEBI" id="CHEBI:133407"/>
        <dbReference type="EC" id="2.3.1.258"/>
    </reaction>
</comment>
<comment type="catalytic activity">
    <reaction evidence="1">
        <text>N-terminal L-methionyl-L-leucyl-[protein] + acetyl-CoA = N-terminal N(alpha)-acetyl-L-methionyl-L-leucyl-[protein] + CoA + H(+)</text>
        <dbReference type="Rhea" id="RHEA:50520"/>
        <dbReference type="Rhea" id="RHEA-COMP:12711"/>
        <dbReference type="Rhea" id="RHEA-COMP:12712"/>
        <dbReference type="ChEBI" id="CHEBI:15378"/>
        <dbReference type="ChEBI" id="CHEBI:57287"/>
        <dbReference type="ChEBI" id="CHEBI:57288"/>
        <dbReference type="ChEBI" id="CHEBI:133377"/>
        <dbReference type="ChEBI" id="CHEBI:133378"/>
        <dbReference type="EC" id="2.3.1.258"/>
    </reaction>
</comment>
<comment type="catalytic activity">
    <reaction evidence="1">
        <text>N-terminal L-methionyl-L-phenylalanyl-[protein] + acetyl-CoA = N-terminal N(alpha)-acetyl-L-methionyl-L-phenylalanyl-[protein] + CoA + H(+)</text>
        <dbReference type="Rhea" id="RHEA:50528"/>
        <dbReference type="Rhea" id="RHEA-COMP:12715"/>
        <dbReference type="Rhea" id="RHEA-COMP:12716"/>
        <dbReference type="ChEBI" id="CHEBI:15378"/>
        <dbReference type="ChEBI" id="CHEBI:57287"/>
        <dbReference type="ChEBI" id="CHEBI:57288"/>
        <dbReference type="ChEBI" id="CHEBI:133382"/>
        <dbReference type="ChEBI" id="CHEBI:133383"/>
        <dbReference type="EC" id="2.3.1.258"/>
    </reaction>
</comment>
<comment type="catalytic activity">
    <reaction evidence="1">
        <text>N-terminal L-methionyl-L-tyrosyl-[protein] + acetyl-CoA = N-terminal N(alpha)-acetyl-L-methionyl-L-tyrosyl-[protein] + CoA + H(+)</text>
        <dbReference type="Rhea" id="RHEA:50532"/>
        <dbReference type="Rhea" id="RHEA-COMP:12717"/>
        <dbReference type="Rhea" id="RHEA-COMP:12718"/>
        <dbReference type="ChEBI" id="CHEBI:15378"/>
        <dbReference type="ChEBI" id="CHEBI:57287"/>
        <dbReference type="ChEBI" id="CHEBI:57288"/>
        <dbReference type="ChEBI" id="CHEBI:133384"/>
        <dbReference type="ChEBI" id="CHEBI:133385"/>
        <dbReference type="EC" id="2.3.1.258"/>
    </reaction>
</comment>
<comment type="subunit">
    <text evidence="3">Interacts with naa35.</text>
</comment>
<comment type="subcellular location">
    <subcellularLocation>
        <location evidence="1">Cytoplasm</location>
    </subcellularLocation>
    <subcellularLocation>
        <location evidence="1">Nucleus</location>
    </subcellularLocation>
    <text evidence="1">Localizes to the cytoplasm in interphase cells.</text>
</comment>
<comment type="developmental stage">
    <text evidence="3">Until 48 hpf, highly expressed in developing vascular structures and epidermis. By 48 hpf, becomes restricted to the developing head. By 5 dpf, observed only in the epidermis.</text>
</comment>
<comment type="similarity">
    <text evidence="4">Belongs to the acetyltransferase family. GNAT subfamily.</text>
</comment>
<keyword id="KW-0012">Acyltransferase</keyword>
<keyword id="KW-0963">Cytoplasm</keyword>
<keyword id="KW-0217">Developmental protein</keyword>
<keyword id="KW-0539">Nucleus</keyword>
<keyword id="KW-1185">Reference proteome</keyword>
<keyword id="KW-0808">Transferase</keyword>
<evidence type="ECO:0000250" key="1">
    <source>
        <dbReference type="UniProtKB" id="Q9GZZ1"/>
    </source>
</evidence>
<evidence type="ECO:0000255" key="2">
    <source>
        <dbReference type="PROSITE-ProRule" id="PRU00532"/>
    </source>
</evidence>
<evidence type="ECO:0000269" key="3">
    <source>
    </source>
</evidence>
<evidence type="ECO:0000305" key="4"/>
<gene>
    <name type="primary">naa50</name>
    <name type="synonym">mak3</name>
    <name type="synonym">nat13</name>
</gene>
<proteinExistence type="evidence at protein level"/>
<sequence length="168" mass="19195">MKGRIELGDVTPHNIKQLKRLNQVIFPVSYNDKFYKDVLEVGELAKLAYFNDIAVGAVCCRVDHSQNQKRLYIMTLGCLAPYRRLGIGTKMLNHVLNICEKDGTFDNIYLHVQISNESAIDFYQKFGFEIIETKKNYYKRIEPADAHVLQKSLRSPCAPPAGELQKAD</sequence>
<protein>
    <recommendedName>
        <fullName>N-alpha-acetyltransferase 50</fullName>
        <ecNumber evidence="1">2.3.1.258</ecNumber>
    </recommendedName>
    <alternativeName>
        <fullName>N-acetyltransferase NAT13</fullName>
    </alternativeName>
    <alternativeName>
        <fullName evidence="1">N-epsilon-acetyltransferase 50</fullName>
        <ecNumber evidence="1">2.3.1.-</ecNumber>
    </alternativeName>
    <alternativeName>
        <fullName>NatE catalytic subunit</fullName>
    </alternativeName>
</protein>
<feature type="chain" id="PRO_0000284905" description="N-alpha-acetyltransferase 50">
    <location>
        <begin position="1"/>
        <end position="168"/>
    </location>
</feature>
<feature type="domain" description="N-acetyltransferase" evidence="2">
    <location>
        <begin position="5"/>
        <end position="154"/>
    </location>
</feature>
<feature type="region of interest" description="Substrate" evidence="1">
    <location>
        <begin position="137"/>
        <end position="140"/>
    </location>
</feature>
<feature type="active site" evidence="1">
    <location>
        <position position="72"/>
    </location>
</feature>
<feature type="active site" evidence="1">
    <location>
        <position position="111"/>
    </location>
</feature>
<feature type="binding site" evidence="1">
    <location>
        <position position="30"/>
    </location>
    <ligand>
        <name>substrate</name>
    </ligand>
</feature>
<feature type="binding site" evidence="1">
    <location>
        <position position="74"/>
    </location>
    <ligand>
        <name>substrate</name>
    </ligand>
</feature>
<feature type="binding site" evidence="1">
    <location>
        <begin position="76"/>
        <end position="89"/>
    </location>
    <ligand>
        <name>acetyl-CoA</name>
        <dbReference type="ChEBI" id="CHEBI:57288"/>
    </ligand>
</feature>
<feature type="binding site" evidence="1">
    <location>
        <begin position="116"/>
        <end position="125"/>
    </location>
    <ligand>
        <name>CoA</name>
        <dbReference type="ChEBI" id="CHEBI:57287"/>
    </ligand>
</feature>
<dbReference type="EC" id="2.3.1.258" evidence="1"/>
<dbReference type="EC" id="2.3.1.-" evidence="1"/>
<dbReference type="EMBL" id="BC078316">
    <property type="protein sequence ID" value="AAH78316.1"/>
    <property type="molecule type" value="mRNA"/>
</dbReference>
<dbReference type="RefSeq" id="NP_001003623.1">
    <property type="nucleotide sequence ID" value="NM_001003623.1"/>
</dbReference>
<dbReference type="SMR" id="Q6DBY2"/>
<dbReference type="FunCoup" id="Q6DBY2">
    <property type="interactions" value="2591"/>
</dbReference>
<dbReference type="STRING" id="7955.ENSDARP00000128760"/>
<dbReference type="PaxDb" id="7955-ENSDARP00000128760"/>
<dbReference type="DNASU" id="445229"/>
<dbReference type="Ensembl" id="ENSDART00000154940">
    <property type="protein sequence ID" value="ENSDARP00000128410"/>
    <property type="gene ID" value="ENSDARG00000027825"/>
</dbReference>
<dbReference type="GeneID" id="445229"/>
<dbReference type="KEGG" id="dre:445229"/>
<dbReference type="AGR" id="ZFIN:ZDB-GENE-040801-142"/>
<dbReference type="CTD" id="80218"/>
<dbReference type="ZFIN" id="ZDB-GENE-040801-142">
    <property type="gene designation" value="naa50"/>
</dbReference>
<dbReference type="eggNOG" id="KOG3138">
    <property type="taxonomic scope" value="Eukaryota"/>
</dbReference>
<dbReference type="HOGENOM" id="CLU_013985_5_3_1"/>
<dbReference type="InParanoid" id="Q6DBY2"/>
<dbReference type="OrthoDB" id="47374at2759"/>
<dbReference type="PhylomeDB" id="Q6DBY2"/>
<dbReference type="PRO" id="PR:Q6DBY2"/>
<dbReference type="Proteomes" id="UP000000437">
    <property type="component" value="Alternate scaffold 24"/>
</dbReference>
<dbReference type="Proteomes" id="UP000000437">
    <property type="component" value="Chromosome 24"/>
</dbReference>
<dbReference type="Bgee" id="ENSDARG00000027825">
    <property type="expression patterns" value="Expressed in mature ovarian follicle and 27 other cell types or tissues"/>
</dbReference>
<dbReference type="ExpressionAtlas" id="Q6DBY2">
    <property type="expression patterns" value="baseline and differential"/>
</dbReference>
<dbReference type="GO" id="GO:0005737">
    <property type="term" value="C:cytoplasm"/>
    <property type="evidence" value="ECO:0000250"/>
    <property type="project" value="UniProtKB"/>
</dbReference>
<dbReference type="GO" id="GO:0005829">
    <property type="term" value="C:cytosol"/>
    <property type="evidence" value="ECO:0000250"/>
    <property type="project" value="UniProtKB"/>
</dbReference>
<dbReference type="GO" id="GO:0031415">
    <property type="term" value="C:NatA complex"/>
    <property type="evidence" value="ECO:0000318"/>
    <property type="project" value="GO_Central"/>
</dbReference>
<dbReference type="GO" id="GO:0005634">
    <property type="term" value="C:nucleus"/>
    <property type="evidence" value="ECO:0000250"/>
    <property type="project" value="UniProtKB"/>
</dbReference>
<dbReference type="GO" id="GO:0010485">
    <property type="term" value="F:histone H4 acetyltransferase activity"/>
    <property type="evidence" value="ECO:0000250"/>
    <property type="project" value="UniProtKB"/>
</dbReference>
<dbReference type="GO" id="GO:0120518">
    <property type="term" value="F:protein N-terminal-methionine acetyltransferase activity"/>
    <property type="evidence" value="ECO:0007669"/>
    <property type="project" value="UniProtKB-EC"/>
</dbReference>
<dbReference type="GO" id="GO:0061733">
    <property type="term" value="F:protein-lysine-acetyltransferase activity"/>
    <property type="evidence" value="ECO:0000250"/>
    <property type="project" value="UniProtKB"/>
</dbReference>
<dbReference type="GO" id="GO:0004596">
    <property type="term" value="F:protein-N-terminal amino-acid acetyltransferase activity"/>
    <property type="evidence" value="ECO:0000250"/>
    <property type="project" value="UniProtKB"/>
</dbReference>
<dbReference type="GO" id="GO:0034087">
    <property type="term" value="P:establishment of mitotic sister chromatid cohesion"/>
    <property type="evidence" value="ECO:0000250"/>
    <property type="project" value="UniProtKB"/>
</dbReference>
<dbReference type="GO" id="GO:0007064">
    <property type="term" value="P:mitotic sister chromatid cohesion"/>
    <property type="evidence" value="ECO:0000318"/>
    <property type="project" value="GO_Central"/>
</dbReference>
<dbReference type="GO" id="GO:0071962">
    <property type="term" value="P:mitotic sister chromatid cohesion, centromeric"/>
    <property type="evidence" value="ECO:0000250"/>
    <property type="project" value="UniProtKB"/>
</dbReference>
<dbReference type="GO" id="GO:0006474">
    <property type="term" value="P:N-terminal protein amino acid acetylation"/>
    <property type="evidence" value="ECO:0000250"/>
    <property type="project" value="UniProtKB"/>
</dbReference>
<dbReference type="GO" id="GO:0001756">
    <property type="term" value="P:somitogenesis"/>
    <property type="evidence" value="ECO:0000315"/>
    <property type="project" value="ZFIN"/>
</dbReference>
<dbReference type="CDD" id="cd04301">
    <property type="entry name" value="NAT_SF"/>
    <property type="match status" value="1"/>
</dbReference>
<dbReference type="FunFam" id="3.40.630.30:FF:000078">
    <property type="entry name" value="N-alpha-acetyltransferase 50"/>
    <property type="match status" value="1"/>
</dbReference>
<dbReference type="Gene3D" id="3.40.630.30">
    <property type="match status" value="1"/>
</dbReference>
<dbReference type="InterPro" id="IPR016181">
    <property type="entry name" value="Acyl_CoA_acyltransferase"/>
</dbReference>
<dbReference type="InterPro" id="IPR000182">
    <property type="entry name" value="GNAT_dom"/>
</dbReference>
<dbReference type="InterPro" id="IPR051556">
    <property type="entry name" value="N-term/lysine_N-AcTrnsfr"/>
</dbReference>
<dbReference type="PANTHER" id="PTHR42919">
    <property type="entry name" value="N-ALPHA-ACETYLTRANSFERASE"/>
    <property type="match status" value="1"/>
</dbReference>
<dbReference type="PANTHER" id="PTHR42919:SF8">
    <property type="entry name" value="N-ALPHA-ACETYLTRANSFERASE 50"/>
    <property type="match status" value="1"/>
</dbReference>
<dbReference type="Pfam" id="PF00583">
    <property type="entry name" value="Acetyltransf_1"/>
    <property type="match status" value="1"/>
</dbReference>
<dbReference type="SUPFAM" id="SSF55729">
    <property type="entry name" value="Acyl-CoA N-acyltransferases (Nat)"/>
    <property type="match status" value="1"/>
</dbReference>
<dbReference type="PROSITE" id="PS51186">
    <property type="entry name" value="GNAT"/>
    <property type="match status" value="1"/>
</dbReference>
<name>NAA50_DANRE</name>
<accession>Q6DBY2</accession>
<organism>
    <name type="scientific">Danio rerio</name>
    <name type="common">Zebrafish</name>
    <name type="synonym">Brachydanio rerio</name>
    <dbReference type="NCBI Taxonomy" id="7955"/>
    <lineage>
        <taxon>Eukaryota</taxon>
        <taxon>Metazoa</taxon>
        <taxon>Chordata</taxon>
        <taxon>Craniata</taxon>
        <taxon>Vertebrata</taxon>
        <taxon>Euteleostomi</taxon>
        <taxon>Actinopterygii</taxon>
        <taxon>Neopterygii</taxon>
        <taxon>Teleostei</taxon>
        <taxon>Ostariophysi</taxon>
        <taxon>Cypriniformes</taxon>
        <taxon>Danionidae</taxon>
        <taxon>Danioninae</taxon>
        <taxon>Danio</taxon>
    </lineage>
</organism>